<feature type="chain" id="PRO_0000236535" description="Large ribosomal subunit protein bL9">
    <location>
        <begin position="1"/>
        <end position="151"/>
    </location>
</feature>
<proteinExistence type="inferred from homology"/>
<organism>
    <name type="scientific">Lactobacillus johnsonii (strain CNCM I-12250 / La1 / NCC 533)</name>
    <dbReference type="NCBI Taxonomy" id="257314"/>
    <lineage>
        <taxon>Bacteria</taxon>
        <taxon>Bacillati</taxon>
        <taxon>Bacillota</taxon>
        <taxon>Bacilli</taxon>
        <taxon>Lactobacillales</taxon>
        <taxon>Lactobacillaceae</taxon>
        <taxon>Lactobacillus</taxon>
    </lineage>
</organism>
<reference key="1">
    <citation type="journal article" date="2004" name="Proc. Natl. Acad. Sci. U.S.A.">
        <title>The genome sequence of the probiotic intestinal bacterium Lactobacillus johnsonii NCC 533.</title>
        <authorList>
            <person name="Pridmore R.D."/>
            <person name="Berger B."/>
            <person name="Desiere F."/>
            <person name="Vilanova D."/>
            <person name="Barretto C."/>
            <person name="Pittet A.-C."/>
            <person name="Zwahlen M.-C."/>
            <person name="Rouvet M."/>
            <person name="Altermann E."/>
            <person name="Barrangou R."/>
            <person name="Mollet B."/>
            <person name="Mercenier A."/>
            <person name="Klaenhammer T."/>
            <person name="Arigoni F."/>
            <person name="Schell M.A."/>
        </authorList>
    </citation>
    <scope>NUCLEOTIDE SEQUENCE [LARGE SCALE GENOMIC DNA]</scope>
    <source>
        <strain>CNCM I-1225 / La1 / NCC 533</strain>
    </source>
</reference>
<sequence>MKVIFIKDMKGKGKRGEVKNVPDGYAQNFLIKNGYAKEATSSNLNTLKRVQKAEKDAYEAEKAAAEDIKKKLEDDKTIVNFKSKAGTDSRLFGSISSKKIVEGLEKQYGIKVDKRKLELPEPIKSLGYTNVPVKLFKGVEAVIRVHITEQD</sequence>
<comment type="function">
    <text evidence="1">Binds to the 23S rRNA.</text>
</comment>
<comment type="similarity">
    <text evidence="1">Belongs to the bacterial ribosomal protein bL9 family.</text>
</comment>
<evidence type="ECO:0000255" key="1">
    <source>
        <dbReference type="HAMAP-Rule" id="MF_00503"/>
    </source>
</evidence>
<evidence type="ECO:0000305" key="2"/>
<gene>
    <name evidence="1" type="primary">rplI</name>
    <name type="ordered locus">LJ_0011</name>
</gene>
<protein>
    <recommendedName>
        <fullName evidence="1">Large ribosomal subunit protein bL9</fullName>
    </recommendedName>
    <alternativeName>
        <fullName evidence="2">50S ribosomal protein L9</fullName>
    </alternativeName>
</protein>
<dbReference type="EMBL" id="AE017198">
    <property type="protein sequence ID" value="AAS07992.1"/>
    <property type="molecule type" value="Genomic_DNA"/>
</dbReference>
<dbReference type="RefSeq" id="WP_003651632.1">
    <property type="nucleotide sequence ID" value="NC_005362.1"/>
</dbReference>
<dbReference type="SMR" id="Q74M23"/>
<dbReference type="GeneID" id="83569447"/>
<dbReference type="KEGG" id="ljo:LJ_0011"/>
<dbReference type="eggNOG" id="COG0359">
    <property type="taxonomic scope" value="Bacteria"/>
</dbReference>
<dbReference type="HOGENOM" id="CLU_078938_3_2_9"/>
<dbReference type="Proteomes" id="UP000000581">
    <property type="component" value="Chromosome"/>
</dbReference>
<dbReference type="GO" id="GO:1990904">
    <property type="term" value="C:ribonucleoprotein complex"/>
    <property type="evidence" value="ECO:0007669"/>
    <property type="project" value="UniProtKB-KW"/>
</dbReference>
<dbReference type="GO" id="GO:0005840">
    <property type="term" value="C:ribosome"/>
    <property type="evidence" value="ECO:0007669"/>
    <property type="project" value="UniProtKB-KW"/>
</dbReference>
<dbReference type="GO" id="GO:0019843">
    <property type="term" value="F:rRNA binding"/>
    <property type="evidence" value="ECO:0007669"/>
    <property type="project" value="UniProtKB-UniRule"/>
</dbReference>
<dbReference type="GO" id="GO:0003735">
    <property type="term" value="F:structural constituent of ribosome"/>
    <property type="evidence" value="ECO:0007669"/>
    <property type="project" value="InterPro"/>
</dbReference>
<dbReference type="GO" id="GO:0006412">
    <property type="term" value="P:translation"/>
    <property type="evidence" value="ECO:0007669"/>
    <property type="project" value="UniProtKB-UniRule"/>
</dbReference>
<dbReference type="FunFam" id="3.40.5.10:FF:000002">
    <property type="entry name" value="50S ribosomal protein L9"/>
    <property type="match status" value="1"/>
</dbReference>
<dbReference type="Gene3D" id="3.10.430.100">
    <property type="entry name" value="Ribosomal protein L9, C-terminal domain"/>
    <property type="match status" value="1"/>
</dbReference>
<dbReference type="Gene3D" id="3.40.5.10">
    <property type="entry name" value="Ribosomal protein L9, N-terminal domain"/>
    <property type="match status" value="1"/>
</dbReference>
<dbReference type="HAMAP" id="MF_00503">
    <property type="entry name" value="Ribosomal_bL9"/>
    <property type="match status" value="1"/>
</dbReference>
<dbReference type="InterPro" id="IPR000244">
    <property type="entry name" value="Ribosomal_bL9"/>
</dbReference>
<dbReference type="InterPro" id="IPR009027">
    <property type="entry name" value="Ribosomal_bL9/RNase_H1_N"/>
</dbReference>
<dbReference type="InterPro" id="IPR020594">
    <property type="entry name" value="Ribosomal_bL9_bac/chp"/>
</dbReference>
<dbReference type="InterPro" id="IPR020069">
    <property type="entry name" value="Ribosomal_bL9_C"/>
</dbReference>
<dbReference type="InterPro" id="IPR036791">
    <property type="entry name" value="Ribosomal_bL9_C_sf"/>
</dbReference>
<dbReference type="InterPro" id="IPR020070">
    <property type="entry name" value="Ribosomal_bL9_N"/>
</dbReference>
<dbReference type="InterPro" id="IPR036935">
    <property type="entry name" value="Ribosomal_bL9_N_sf"/>
</dbReference>
<dbReference type="NCBIfam" id="TIGR00158">
    <property type="entry name" value="L9"/>
    <property type="match status" value="1"/>
</dbReference>
<dbReference type="PANTHER" id="PTHR21368">
    <property type="entry name" value="50S RIBOSOMAL PROTEIN L9"/>
    <property type="match status" value="1"/>
</dbReference>
<dbReference type="Pfam" id="PF03948">
    <property type="entry name" value="Ribosomal_L9_C"/>
    <property type="match status" value="1"/>
</dbReference>
<dbReference type="Pfam" id="PF01281">
    <property type="entry name" value="Ribosomal_L9_N"/>
    <property type="match status" value="1"/>
</dbReference>
<dbReference type="SUPFAM" id="SSF55658">
    <property type="entry name" value="L9 N-domain-like"/>
    <property type="match status" value="1"/>
</dbReference>
<dbReference type="SUPFAM" id="SSF55653">
    <property type="entry name" value="Ribosomal protein L9 C-domain"/>
    <property type="match status" value="1"/>
</dbReference>
<dbReference type="PROSITE" id="PS00651">
    <property type="entry name" value="RIBOSOMAL_L9"/>
    <property type="match status" value="1"/>
</dbReference>
<name>RL9_LACJO</name>
<keyword id="KW-0687">Ribonucleoprotein</keyword>
<keyword id="KW-0689">Ribosomal protein</keyword>
<keyword id="KW-0694">RNA-binding</keyword>
<keyword id="KW-0699">rRNA-binding</keyword>
<accession>Q74M23</accession>